<sequence>MTAPGRRSSTFSRLLRHGFTDPSAAERLLESAELEPVKADPVLLEALGATADPDLALLGLVRLVEAQDDHTARRELLDTLIAAKPLRDRLLGVLGASAALADHLARHPRDWQALVTYEPRDLHPGVEEFERGLAEAADPVSLRVAYRRCLLSIAARDVCGTTDLAQTAAELADLATATLRAALLIARTAAPDDAAICRLAVIAMGKCGGHELNYVSDVDVIFVGEPANGADEGKAVQAATRLASHMMRICSETTVEGTIWPVDANLRPEGRNGPLVRTLSSHLAYYQRWAKTWEFQALLKARPVAGDIGLGEEYVATLAPLVWQAAERDNFVADVQKMRRRVVANIPAAEIERELKLGPGGLRDVEFAVQLLQLVHGRADASLRSGTTLDALKALAAGGYVGRADAVQLDEAYRFLRTMEHRIQLFRLRRTHLVPEDDADLRRIGRSLGLRADPITDLNREWKRHATVVRRLHEKLFYRPLLDAVAQLAPGEARLSPNAARERLVALGYADPAAALRHLEALASGVTRKAAIQRTLLPVLLGWFADSADPDAGLLNFRKVSDALGKTPWYLRLLRDEGAAAENLARVLSAGRLAPDLLMRAPEAVALLGDGDGGRGGLEPRGRAQLEQEVLAAVGRAGGSEQAVTTVRGVRRRELFRTAARDIVSSYGTEETPAEADQGALVDLVGGAVSDLTAATLAGTLRAVVREGWGDTLPTRFAVVGMGRFGGYELGYGSDADVLFVHEPREGVDEQEAARAANAVVSEMRRLLQIPSADPPLLIDADLRPEGKSGPTVRTLTSYEAYYRRWSLVWESQALLRAEFVAGDEELGQRFIELIDPFRYPAEGLGDDAVREIRRLKARMEAERLPRGADPTLHTKLGRGGLSDVEWTVQLLQLQHGWVEPGLRTTRTRPALAAACAAGLLTGEDAAILDEAWVLATRVRNAVMLVRGRAGDTFPSDGRELAAVGRYLGYGPGHVGDMLDDYRRITRRARAVVDEQFYGA</sequence>
<reference key="1">
    <citation type="journal article" date="2001" name="Proc. Natl. Acad. Sci. U.S.A.">
        <title>Genome sequence of an industrial microorganism Streptomyces avermitilis: deducing the ability of producing secondary metabolites.</title>
        <authorList>
            <person name="Omura S."/>
            <person name="Ikeda H."/>
            <person name="Ishikawa J."/>
            <person name="Hanamoto A."/>
            <person name="Takahashi C."/>
            <person name="Shinose M."/>
            <person name="Takahashi Y."/>
            <person name="Horikawa H."/>
            <person name="Nakazawa H."/>
            <person name="Osonoe T."/>
            <person name="Kikuchi H."/>
            <person name="Shiba T."/>
            <person name="Sakaki Y."/>
            <person name="Hattori M."/>
        </authorList>
    </citation>
    <scope>NUCLEOTIDE SEQUENCE [LARGE SCALE GENOMIC DNA]</scope>
    <source>
        <strain>ATCC 31267 / DSM 46492 / JCM 5070 / NBRC 14893 / NCIMB 12804 / NRRL 8165 / MA-4680</strain>
    </source>
</reference>
<reference key="2">
    <citation type="journal article" date="2003" name="Nat. Biotechnol.">
        <title>Complete genome sequence and comparative analysis of the industrial microorganism Streptomyces avermitilis.</title>
        <authorList>
            <person name="Ikeda H."/>
            <person name="Ishikawa J."/>
            <person name="Hanamoto A."/>
            <person name="Shinose M."/>
            <person name="Kikuchi H."/>
            <person name="Shiba T."/>
            <person name="Sakaki Y."/>
            <person name="Hattori M."/>
            <person name="Omura S."/>
        </authorList>
    </citation>
    <scope>NUCLEOTIDE SEQUENCE [LARGE SCALE GENOMIC DNA]</scope>
    <source>
        <strain>ATCC 31267 / DSM 46492 / JCM 5070 / NBRC 14893 / NCIMB 12804 / NRRL 8165 / MA-4680</strain>
    </source>
</reference>
<feature type="chain" id="PRO_0000209279" description="Bifunctional glutamine synthetase adenylyltransferase/adenylyl-removing enzyme">
    <location>
        <begin position="1"/>
        <end position="1000"/>
    </location>
</feature>
<feature type="region of interest" description="Adenylyl removase" evidence="1">
    <location>
        <begin position="1"/>
        <end position="481"/>
    </location>
</feature>
<feature type="region of interest" description="Adenylyl transferase" evidence="1">
    <location>
        <begin position="487"/>
        <end position="1000"/>
    </location>
</feature>
<accession>Q81ZW1</accession>
<evidence type="ECO:0000255" key="1">
    <source>
        <dbReference type="HAMAP-Rule" id="MF_00802"/>
    </source>
</evidence>
<keyword id="KW-0067">ATP-binding</keyword>
<keyword id="KW-0460">Magnesium</keyword>
<keyword id="KW-0511">Multifunctional enzyme</keyword>
<keyword id="KW-0547">Nucleotide-binding</keyword>
<keyword id="KW-0548">Nucleotidyltransferase</keyword>
<keyword id="KW-1185">Reference proteome</keyword>
<keyword id="KW-0808">Transferase</keyword>
<gene>
    <name evidence="1" type="primary">glnE</name>
    <name type="ordered locus">SAV_5972</name>
</gene>
<proteinExistence type="inferred from homology"/>
<comment type="function">
    <text evidence="1">Involved in the regulation of glutamine synthetase GlnA, a key enzyme in the process to assimilate ammonia. When cellular nitrogen levels are high, the C-terminal adenylyl transferase (AT) inactivates GlnA by covalent transfer of an adenylyl group from ATP to specific tyrosine residue of GlnA, thus reducing its activity. Conversely, when nitrogen levels are low, the N-terminal adenylyl removase (AR) activates GlnA by removing the adenylyl group by phosphorolysis, increasing its activity. The regulatory region of GlnE binds the signal transduction protein PII (GlnB) which indicates the nitrogen status of the cell.</text>
</comment>
<comment type="catalytic activity">
    <reaction evidence="1">
        <text>[glutamine synthetase]-O(4)-(5'-adenylyl)-L-tyrosine + phosphate = [glutamine synthetase]-L-tyrosine + ADP</text>
        <dbReference type="Rhea" id="RHEA:43716"/>
        <dbReference type="Rhea" id="RHEA-COMP:10660"/>
        <dbReference type="Rhea" id="RHEA-COMP:10661"/>
        <dbReference type="ChEBI" id="CHEBI:43474"/>
        <dbReference type="ChEBI" id="CHEBI:46858"/>
        <dbReference type="ChEBI" id="CHEBI:83624"/>
        <dbReference type="ChEBI" id="CHEBI:456216"/>
        <dbReference type="EC" id="2.7.7.89"/>
    </reaction>
</comment>
<comment type="catalytic activity">
    <reaction evidence="1">
        <text>[glutamine synthetase]-L-tyrosine + ATP = [glutamine synthetase]-O(4)-(5'-adenylyl)-L-tyrosine + diphosphate</text>
        <dbReference type="Rhea" id="RHEA:18589"/>
        <dbReference type="Rhea" id="RHEA-COMP:10660"/>
        <dbReference type="Rhea" id="RHEA-COMP:10661"/>
        <dbReference type="ChEBI" id="CHEBI:30616"/>
        <dbReference type="ChEBI" id="CHEBI:33019"/>
        <dbReference type="ChEBI" id="CHEBI:46858"/>
        <dbReference type="ChEBI" id="CHEBI:83624"/>
        <dbReference type="EC" id="2.7.7.42"/>
    </reaction>
</comment>
<comment type="cofactor">
    <cofactor evidence="1">
        <name>Mg(2+)</name>
        <dbReference type="ChEBI" id="CHEBI:18420"/>
    </cofactor>
</comment>
<comment type="similarity">
    <text evidence="1">Belongs to the GlnE family.</text>
</comment>
<name>GLNE_STRAW</name>
<organism>
    <name type="scientific">Streptomyces avermitilis (strain ATCC 31267 / DSM 46492 / JCM 5070 / NBRC 14893 / NCIMB 12804 / NRRL 8165 / MA-4680)</name>
    <dbReference type="NCBI Taxonomy" id="227882"/>
    <lineage>
        <taxon>Bacteria</taxon>
        <taxon>Bacillati</taxon>
        <taxon>Actinomycetota</taxon>
        <taxon>Actinomycetes</taxon>
        <taxon>Kitasatosporales</taxon>
        <taxon>Streptomycetaceae</taxon>
        <taxon>Streptomyces</taxon>
    </lineage>
</organism>
<protein>
    <recommendedName>
        <fullName evidence="1">Bifunctional glutamine synthetase adenylyltransferase/adenylyl-removing enzyme</fullName>
    </recommendedName>
    <alternativeName>
        <fullName evidence="1">ATP:glutamine synthetase adenylyltransferase</fullName>
    </alternativeName>
    <alternativeName>
        <fullName evidence="1">ATase</fullName>
    </alternativeName>
    <domain>
        <recommendedName>
            <fullName evidence="1">Glutamine synthetase adenylyl-L-tyrosine phosphorylase</fullName>
            <ecNumber evidence="1">2.7.7.89</ecNumber>
        </recommendedName>
        <alternativeName>
            <fullName evidence="1">Adenylyl removase</fullName>
            <shortName evidence="1">AR</shortName>
            <shortName evidence="1">AT-N</shortName>
        </alternativeName>
    </domain>
    <domain>
        <recommendedName>
            <fullName evidence="1">Glutamine synthetase adenylyl transferase</fullName>
            <ecNumber evidence="1">2.7.7.42</ecNumber>
        </recommendedName>
        <alternativeName>
            <fullName evidence="1">Adenylyl transferase</fullName>
            <shortName evidence="1">AT</shortName>
            <shortName evidence="1">AT-C</shortName>
        </alternativeName>
    </domain>
</protein>
<dbReference type="EC" id="2.7.7.89" evidence="1"/>
<dbReference type="EC" id="2.7.7.42" evidence="1"/>
<dbReference type="EMBL" id="BA000030">
    <property type="protein sequence ID" value="BAC73684.1"/>
    <property type="molecule type" value="Genomic_DNA"/>
</dbReference>
<dbReference type="RefSeq" id="WP_010987374.1">
    <property type="nucleotide sequence ID" value="NZ_JZJK01000089.1"/>
</dbReference>
<dbReference type="SMR" id="Q81ZW1"/>
<dbReference type="GeneID" id="41543051"/>
<dbReference type="KEGG" id="sma:SAVERM_5972"/>
<dbReference type="eggNOG" id="COG1391">
    <property type="taxonomic scope" value="Bacteria"/>
</dbReference>
<dbReference type="HOGENOM" id="CLU_006233_1_0_11"/>
<dbReference type="OrthoDB" id="9759366at2"/>
<dbReference type="Proteomes" id="UP000000428">
    <property type="component" value="Chromosome"/>
</dbReference>
<dbReference type="GO" id="GO:0005829">
    <property type="term" value="C:cytosol"/>
    <property type="evidence" value="ECO:0007669"/>
    <property type="project" value="TreeGrafter"/>
</dbReference>
<dbReference type="GO" id="GO:0008882">
    <property type="term" value="F:[glutamate-ammonia-ligase] adenylyltransferase activity"/>
    <property type="evidence" value="ECO:0007669"/>
    <property type="project" value="UniProtKB-UniRule"/>
</dbReference>
<dbReference type="GO" id="GO:0047388">
    <property type="term" value="F:[glutamine synthetase]-adenylyl-L-tyrosine phosphorylase activity"/>
    <property type="evidence" value="ECO:0007669"/>
    <property type="project" value="UniProtKB-EC"/>
</dbReference>
<dbReference type="GO" id="GO:0005524">
    <property type="term" value="F:ATP binding"/>
    <property type="evidence" value="ECO:0007669"/>
    <property type="project" value="UniProtKB-UniRule"/>
</dbReference>
<dbReference type="GO" id="GO:0000287">
    <property type="term" value="F:magnesium ion binding"/>
    <property type="evidence" value="ECO:0007669"/>
    <property type="project" value="UniProtKB-UniRule"/>
</dbReference>
<dbReference type="GO" id="GO:0000820">
    <property type="term" value="P:regulation of glutamine family amino acid metabolic process"/>
    <property type="evidence" value="ECO:0007669"/>
    <property type="project" value="UniProtKB-UniRule"/>
</dbReference>
<dbReference type="CDD" id="cd05401">
    <property type="entry name" value="NT_GlnE_GlnD_like"/>
    <property type="match status" value="2"/>
</dbReference>
<dbReference type="FunFam" id="1.20.120.1510:FF:000003">
    <property type="entry name" value="Bifunctional glutamine synthetase adenylyltransferase/adenylyl-removing enzyme"/>
    <property type="match status" value="1"/>
</dbReference>
<dbReference type="Gene3D" id="1.20.120.1510">
    <property type="match status" value="1"/>
</dbReference>
<dbReference type="Gene3D" id="3.30.460.10">
    <property type="entry name" value="Beta Polymerase, domain 2"/>
    <property type="match status" value="2"/>
</dbReference>
<dbReference type="Gene3D" id="1.20.120.330">
    <property type="entry name" value="Nucleotidyltransferases domain 2"/>
    <property type="match status" value="2"/>
</dbReference>
<dbReference type="HAMAP" id="MF_00802">
    <property type="entry name" value="GlnE"/>
    <property type="match status" value="1"/>
</dbReference>
<dbReference type="InterPro" id="IPR023057">
    <property type="entry name" value="GlnE"/>
</dbReference>
<dbReference type="InterPro" id="IPR005190">
    <property type="entry name" value="GlnE_rpt_dom"/>
</dbReference>
<dbReference type="InterPro" id="IPR043519">
    <property type="entry name" value="NT_sf"/>
</dbReference>
<dbReference type="InterPro" id="IPR013546">
    <property type="entry name" value="PII_UdlTrfase/GS_AdlTrfase"/>
</dbReference>
<dbReference type="NCBIfam" id="NF010707">
    <property type="entry name" value="PRK14109.1"/>
    <property type="match status" value="1"/>
</dbReference>
<dbReference type="PANTHER" id="PTHR30621:SF0">
    <property type="entry name" value="BIFUNCTIONAL GLUTAMINE SYNTHETASE ADENYLYLTRANSFERASE_ADENYLYL-REMOVING ENZYME"/>
    <property type="match status" value="1"/>
</dbReference>
<dbReference type="PANTHER" id="PTHR30621">
    <property type="entry name" value="GLUTAMINE SYNTHETASE ADENYLYLTRANSFERASE"/>
    <property type="match status" value="1"/>
</dbReference>
<dbReference type="Pfam" id="PF08335">
    <property type="entry name" value="GlnD_UR_UTase"/>
    <property type="match status" value="2"/>
</dbReference>
<dbReference type="Pfam" id="PF03710">
    <property type="entry name" value="GlnE"/>
    <property type="match status" value="2"/>
</dbReference>
<dbReference type="SUPFAM" id="SSF81301">
    <property type="entry name" value="Nucleotidyltransferase"/>
    <property type="match status" value="2"/>
</dbReference>
<dbReference type="SUPFAM" id="SSF81593">
    <property type="entry name" value="Nucleotidyltransferase substrate binding subunit/domain"/>
    <property type="match status" value="2"/>
</dbReference>